<dbReference type="EC" id="6.3.4.4" evidence="2"/>
<dbReference type="EMBL" id="BC070009">
    <property type="protein sequence ID" value="AAH70009.1"/>
    <property type="molecule type" value="mRNA"/>
</dbReference>
<dbReference type="RefSeq" id="NP_999985.1">
    <property type="nucleotide sequence ID" value="NM_214820.1"/>
</dbReference>
<dbReference type="SMR" id="Q6NSN5"/>
<dbReference type="FunCoup" id="Q6NSN5">
    <property type="interactions" value="1398"/>
</dbReference>
<dbReference type="STRING" id="7955.ENSDARP00000136105"/>
<dbReference type="iPTMnet" id="Q6NSN5"/>
<dbReference type="PaxDb" id="7955-ENSDARP00000046076"/>
<dbReference type="Ensembl" id="ENSDART00000172540">
    <property type="protein sequence ID" value="ENSDARP00000136105"/>
    <property type="gene ID" value="ENSDARG00000099517"/>
</dbReference>
<dbReference type="GeneID" id="407989"/>
<dbReference type="KEGG" id="dre:407989"/>
<dbReference type="AGR" id="ZFIN:ZDB-GENE-040516-18"/>
<dbReference type="CTD" id="122622"/>
<dbReference type="ZFIN" id="ZDB-GENE-040516-18">
    <property type="gene designation" value="adss1"/>
</dbReference>
<dbReference type="eggNOG" id="KOG1355">
    <property type="taxonomic scope" value="Eukaryota"/>
</dbReference>
<dbReference type="InParanoid" id="Q6NSN5"/>
<dbReference type="OMA" id="GVPFKWI"/>
<dbReference type="OrthoDB" id="10265645at2759"/>
<dbReference type="PhylomeDB" id="Q6NSN5"/>
<dbReference type="TreeFam" id="TF300486"/>
<dbReference type="Reactome" id="R-DRE-73817">
    <property type="pathway name" value="Purine ribonucleoside monophosphate biosynthesis"/>
</dbReference>
<dbReference type="UniPathway" id="UPA00075">
    <property type="reaction ID" value="UER00335"/>
</dbReference>
<dbReference type="PRO" id="PR:Q6NSN5"/>
<dbReference type="Proteomes" id="UP000000437">
    <property type="component" value="Chromosome 17"/>
</dbReference>
<dbReference type="Bgee" id="ENSDARG00000099517">
    <property type="expression patterns" value="Expressed in muscle tissue and 20 other cell types or tissues"/>
</dbReference>
<dbReference type="ExpressionAtlas" id="Q6NSN5">
    <property type="expression patterns" value="baseline and differential"/>
</dbReference>
<dbReference type="GO" id="GO:0005737">
    <property type="term" value="C:cytoplasm"/>
    <property type="evidence" value="ECO:0000318"/>
    <property type="project" value="GO_Central"/>
</dbReference>
<dbReference type="GO" id="GO:0004019">
    <property type="term" value="F:adenylosuccinate synthase activity"/>
    <property type="evidence" value="ECO:0000250"/>
    <property type="project" value="UniProtKB"/>
</dbReference>
<dbReference type="GO" id="GO:0005525">
    <property type="term" value="F:GTP binding"/>
    <property type="evidence" value="ECO:0007669"/>
    <property type="project" value="UniProtKB-UniRule"/>
</dbReference>
<dbReference type="GO" id="GO:0000287">
    <property type="term" value="F:magnesium ion binding"/>
    <property type="evidence" value="ECO:0007669"/>
    <property type="project" value="UniProtKB-UniRule"/>
</dbReference>
<dbReference type="GO" id="GO:0044208">
    <property type="term" value="P:'de novo' AMP biosynthetic process"/>
    <property type="evidence" value="ECO:0000318"/>
    <property type="project" value="GO_Central"/>
</dbReference>
<dbReference type="GO" id="GO:0046040">
    <property type="term" value="P:IMP metabolic process"/>
    <property type="evidence" value="ECO:0000318"/>
    <property type="project" value="GO_Central"/>
</dbReference>
<dbReference type="GO" id="GO:0046716">
    <property type="term" value="P:muscle cell cellular homeostasis"/>
    <property type="evidence" value="ECO:0000315"/>
    <property type="project" value="ZFIN"/>
</dbReference>
<dbReference type="GO" id="GO:0048741">
    <property type="term" value="P:skeletal muscle fiber development"/>
    <property type="evidence" value="ECO:0000315"/>
    <property type="project" value="ZFIN"/>
</dbReference>
<dbReference type="CDD" id="cd03108">
    <property type="entry name" value="AdSS"/>
    <property type="match status" value="1"/>
</dbReference>
<dbReference type="FunFam" id="3.90.170.10:FF:000001">
    <property type="entry name" value="Adenylosuccinate synthetase"/>
    <property type="match status" value="1"/>
</dbReference>
<dbReference type="FunFam" id="1.10.300.10:FF:000002">
    <property type="entry name" value="Adenylosuccinate synthetase, chloroplastic"/>
    <property type="match status" value="1"/>
</dbReference>
<dbReference type="Gene3D" id="3.40.440.10">
    <property type="entry name" value="Adenylosuccinate Synthetase, subunit A, domain 1"/>
    <property type="match status" value="1"/>
</dbReference>
<dbReference type="Gene3D" id="1.10.300.10">
    <property type="entry name" value="Adenylosuccinate Synthetase, subunit A, domain 2"/>
    <property type="match status" value="1"/>
</dbReference>
<dbReference type="Gene3D" id="3.90.170.10">
    <property type="entry name" value="Adenylosuccinate Synthetase, subunit A, domain 3"/>
    <property type="match status" value="1"/>
</dbReference>
<dbReference type="HAMAP" id="MF_00011">
    <property type="entry name" value="Adenylosucc_synth"/>
    <property type="match status" value="1"/>
</dbReference>
<dbReference type="HAMAP" id="MF_03126">
    <property type="entry name" value="Adenylosucc_synth_vert_basic"/>
    <property type="match status" value="1"/>
</dbReference>
<dbReference type="InterPro" id="IPR018220">
    <property type="entry name" value="Adenylosuccin_syn_GTP-bd"/>
</dbReference>
<dbReference type="InterPro" id="IPR033128">
    <property type="entry name" value="Adenylosuccin_syn_Lys_AS"/>
</dbReference>
<dbReference type="InterPro" id="IPR042109">
    <property type="entry name" value="Adenylosuccinate_synth_dom1"/>
</dbReference>
<dbReference type="InterPro" id="IPR042110">
    <property type="entry name" value="Adenylosuccinate_synth_dom2"/>
</dbReference>
<dbReference type="InterPro" id="IPR042111">
    <property type="entry name" value="Adenylosuccinate_synth_dom3"/>
</dbReference>
<dbReference type="InterPro" id="IPR001114">
    <property type="entry name" value="Adenylosuccinate_synthetase"/>
</dbReference>
<dbReference type="InterPro" id="IPR027509">
    <property type="entry name" value="AdSS_1_vert"/>
</dbReference>
<dbReference type="InterPro" id="IPR027417">
    <property type="entry name" value="P-loop_NTPase"/>
</dbReference>
<dbReference type="NCBIfam" id="NF002223">
    <property type="entry name" value="PRK01117.1"/>
    <property type="match status" value="1"/>
</dbReference>
<dbReference type="NCBIfam" id="TIGR00184">
    <property type="entry name" value="purA"/>
    <property type="match status" value="1"/>
</dbReference>
<dbReference type="PANTHER" id="PTHR11846">
    <property type="entry name" value="ADENYLOSUCCINATE SYNTHETASE"/>
    <property type="match status" value="1"/>
</dbReference>
<dbReference type="PANTHER" id="PTHR11846:SF2">
    <property type="entry name" value="ADENYLOSUCCINATE SYNTHETASE ISOZYME 1"/>
    <property type="match status" value="1"/>
</dbReference>
<dbReference type="Pfam" id="PF00709">
    <property type="entry name" value="Adenylsucc_synt"/>
    <property type="match status" value="1"/>
</dbReference>
<dbReference type="SMART" id="SM00788">
    <property type="entry name" value="Adenylsucc_synt"/>
    <property type="match status" value="1"/>
</dbReference>
<dbReference type="SUPFAM" id="SSF52540">
    <property type="entry name" value="P-loop containing nucleoside triphosphate hydrolases"/>
    <property type="match status" value="1"/>
</dbReference>
<dbReference type="PROSITE" id="PS01266">
    <property type="entry name" value="ADENYLOSUCCIN_SYN_1"/>
    <property type="match status" value="1"/>
</dbReference>
<dbReference type="PROSITE" id="PS00513">
    <property type="entry name" value="ADENYLOSUCCIN_SYN_2"/>
    <property type="match status" value="1"/>
</dbReference>
<evidence type="ECO:0000250" key="1">
    <source>
        <dbReference type="UniProtKB" id="Q8N142"/>
    </source>
</evidence>
<evidence type="ECO:0000255" key="2">
    <source>
        <dbReference type="HAMAP-Rule" id="MF_03126"/>
    </source>
</evidence>
<evidence type="ECO:0000256" key="3">
    <source>
        <dbReference type="SAM" id="MobiDB-lite"/>
    </source>
</evidence>
<evidence type="ECO:0000269" key="4">
    <source>
    </source>
</evidence>
<evidence type="ECO:0000269" key="5">
    <source>
    </source>
</evidence>
<organism>
    <name type="scientific">Danio rerio</name>
    <name type="common">Zebrafish</name>
    <name type="synonym">Brachydanio rerio</name>
    <dbReference type="NCBI Taxonomy" id="7955"/>
    <lineage>
        <taxon>Eukaryota</taxon>
        <taxon>Metazoa</taxon>
        <taxon>Chordata</taxon>
        <taxon>Craniata</taxon>
        <taxon>Vertebrata</taxon>
        <taxon>Euteleostomi</taxon>
        <taxon>Actinopterygii</taxon>
        <taxon>Neopterygii</taxon>
        <taxon>Teleostei</taxon>
        <taxon>Ostariophysi</taxon>
        <taxon>Cypriniformes</taxon>
        <taxon>Danionidae</taxon>
        <taxon>Danioninae</taxon>
        <taxon>Danio</taxon>
    </lineage>
</organism>
<proteinExistence type="evidence at protein level"/>
<gene>
    <name type="primary">adss1</name>
    <name type="synonym">adssl1</name>
    <name type="ORF">zgc:85738</name>
</gene>
<reference key="1">
    <citation type="submission" date="2004-05" db="EMBL/GenBank/DDBJ databases">
        <authorList>
            <consortium name="NIH - Zebrafish Gene Collection (ZGC) project"/>
        </authorList>
    </citation>
    <scope>NUCLEOTIDE SEQUENCE [LARGE SCALE MRNA]</scope>
    <source>
        <tissue>Embryo</tissue>
    </source>
</reference>
<reference key="2">
    <citation type="journal article" date="2008" name="J. Proteome Res.">
        <title>Online automated in vivo zebrafish phosphoproteomics: from large-scale analysis down to a single embryo.</title>
        <authorList>
            <person name="Lemeer S."/>
            <person name="Pinkse M.W.H."/>
            <person name="Mohammed S."/>
            <person name="van Breukelen B."/>
            <person name="den Hertog J."/>
            <person name="Slijper M."/>
            <person name="Heck A.J.R."/>
        </authorList>
    </citation>
    <scope>PHOSPHORYLATION [LARGE SCALE ANALYSIS] AT SER-130</scope>
    <scope>IDENTIFICATION BY MASS SPECTROMETRY</scope>
    <source>
        <tissue>Embryo</tissue>
    </source>
</reference>
<reference key="3">
    <citation type="journal article" date="2016" name="Ann. Neurol.">
        <title>ADSSL1 mutation relevant to autosomal recessive adolescent onset distal myopathy.</title>
        <authorList>
            <person name="Park H.J."/>
            <person name="Hong Y.B."/>
            <person name="Choi Y.C."/>
            <person name="Lee J."/>
            <person name="Kim E.J."/>
            <person name="Lee J.S."/>
            <person name="Mo W.M."/>
            <person name="Ki S.M."/>
            <person name="Kim H.I."/>
            <person name="Kim H.J."/>
            <person name="Hyun Y.S."/>
            <person name="Hong H.D."/>
            <person name="Nam K."/>
            <person name="Jung S.C."/>
            <person name="Kim S.B."/>
            <person name="Kim S.H."/>
            <person name="Kim D.H."/>
            <person name="Oh K.W."/>
            <person name="Kim S.H."/>
            <person name="Yoo J.H."/>
            <person name="Lee J.E."/>
            <person name="Chung K.W."/>
            <person name="Choi B.O."/>
        </authorList>
    </citation>
    <scope>DISRUPTION PHENOTYPE</scope>
</reference>
<sequence>MSSGWSQNDHRSYSNPPPVSGKRPRNDSGNKVTVVLGAQWGDEGKGKVVDLLATESDIVGRCQGGNNAGHTVVVEEKEYDFHLLPSGIINTKCTSFIGNGVVIHLPGLFEEIDKNEKKGLKGWEKRLVISDRAHIVFDFHQAVDGLQETQRQAQEGKNIGTTKKGIGPTYACKASRTGLRICDLMADFNEFSTRVKNLVQQYQSMYPTLKVDVESELKKLKEYAERIRPLVRDGVYFMYDAIHGPQKKILVEGANAALLDIDFGTYPFVTSSNCTVGGVCTGLGIPPANIGDVYGVSKAYTTRVGIGAFPTEQLNAVGELLQTRGHEVGVTTGRKRRCGWLDLVILKYAHMINGFTAIALTKLDILDVLDEIKVGVAYKINGKRIPHFPANLEVLQKVEVEYETFPGWKSDTSAARKWGDLPAKAQNYIRFVENHIGVPIKWVGVGKSRECMIQMF</sequence>
<protein>
    <recommendedName>
        <fullName evidence="2">Adenylosuccinate synthetase isozyme 1</fullName>
        <shortName evidence="2">AMPSase 1</shortName>
        <shortName evidence="2">AdSS 1</shortName>
        <ecNumber evidence="2">6.3.4.4</ecNumber>
    </recommendedName>
    <alternativeName>
        <fullName evidence="2">Adenylosuccinate synthetase, basic isozyme</fullName>
    </alternativeName>
    <alternativeName>
        <fullName evidence="2">Adenylosuccinate synthetase, muscle isozyme</fullName>
        <shortName evidence="2">M-type adenylosuccinate synthetase</shortName>
    </alternativeName>
    <alternativeName>
        <fullName evidence="2">IMP--aspartate ligase 1</fullName>
    </alternativeName>
</protein>
<comment type="function">
    <text evidence="1">Component of the purine nucleotide cycle (PNC), which interconverts IMP and AMP to regulate the nucleotide levels in various tissues, and which contributes to glycolysis and ammoniagenesis. Catalyzes the first committed step in the biosynthesis of AMP from IMP.</text>
</comment>
<comment type="catalytic activity">
    <reaction evidence="2">
        <text>IMP + L-aspartate + GTP = N(6)-(1,2-dicarboxyethyl)-AMP + GDP + phosphate + 2 H(+)</text>
        <dbReference type="Rhea" id="RHEA:15753"/>
        <dbReference type="ChEBI" id="CHEBI:15378"/>
        <dbReference type="ChEBI" id="CHEBI:29991"/>
        <dbReference type="ChEBI" id="CHEBI:37565"/>
        <dbReference type="ChEBI" id="CHEBI:43474"/>
        <dbReference type="ChEBI" id="CHEBI:57567"/>
        <dbReference type="ChEBI" id="CHEBI:58053"/>
        <dbReference type="ChEBI" id="CHEBI:58189"/>
        <dbReference type="EC" id="6.3.4.4"/>
    </reaction>
</comment>
<comment type="cofactor">
    <cofactor evidence="2">
        <name>Mg(2+)</name>
        <dbReference type="ChEBI" id="CHEBI:18420"/>
    </cofactor>
    <text evidence="2">Binds 1 Mg(2+) ion per subunit.</text>
</comment>
<comment type="pathway">
    <text evidence="2">Purine metabolism; AMP biosynthesis via de novo pathway; AMP from IMP: step 1/2.</text>
</comment>
<comment type="subunit">
    <text evidence="2">Homodimer.</text>
</comment>
<comment type="subcellular location">
    <subcellularLocation>
        <location evidence="2">Cytoplasm</location>
    </subcellularLocation>
</comment>
<comment type="disruption phenotype">
    <text evidence="5">Morpholino knockdown of the protein in embryos results in severe disruption of muscle fibers.</text>
</comment>
<comment type="similarity">
    <text evidence="2">Belongs to the adenylosuccinate synthetase family.</text>
</comment>
<name>PURA1_DANRE</name>
<feature type="chain" id="PRO_0000398887" description="Adenylosuccinate synthetase isozyme 1">
    <location>
        <begin position="1"/>
        <end position="456"/>
    </location>
</feature>
<feature type="region of interest" description="Disordered" evidence="3">
    <location>
        <begin position="1"/>
        <end position="30"/>
    </location>
</feature>
<feature type="active site" description="Proton acceptor" evidence="2">
    <location>
        <position position="42"/>
    </location>
</feature>
<feature type="active site" description="Proton donor" evidence="2">
    <location>
        <position position="70"/>
    </location>
</feature>
<feature type="binding site" evidence="2">
    <location>
        <begin position="41"/>
        <end position="47"/>
    </location>
    <ligand>
        <name>GTP</name>
        <dbReference type="ChEBI" id="CHEBI:37565"/>
    </ligand>
</feature>
<feature type="binding site" description="in other chain" evidence="2">
    <location>
        <begin position="42"/>
        <end position="45"/>
    </location>
    <ligand>
        <name>IMP</name>
        <dbReference type="ChEBI" id="CHEBI:58053"/>
        <note>ligand shared between dimeric partners</note>
    </ligand>
</feature>
<feature type="binding site" evidence="2">
    <location>
        <position position="42"/>
    </location>
    <ligand>
        <name>Mg(2+)</name>
        <dbReference type="ChEBI" id="CHEBI:18420"/>
    </ligand>
</feature>
<feature type="binding site" evidence="2">
    <location>
        <position position="42"/>
    </location>
    <ligand>
        <name>substrate</name>
    </ligand>
</feature>
<feature type="binding site" description="in other chain" evidence="2">
    <location>
        <begin position="67"/>
        <end position="70"/>
    </location>
    <ligand>
        <name>IMP</name>
        <dbReference type="ChEBI" id="CHEBI:58053"/>
        <note>ligand shared between dimeric partners</note>
    </ligand>
</feature>
<feature type="binding site" evidence="2">
    <location>
        <begin position="69"/>
        <end position="71"/>
    </location>
    <ligand>
        <name>GTP</name>
        <dbReference type="ChEBI" id="CHEBI:37565"/>
    </ligand>
</feature>
<feature type="binding site" evidence="2">
    <location>
        <position position="69"/>
    </location>
    <ligand>
        <name>Mg(2+)</name>
        <dbReference type="ChEBI" id="CHEBI:18420"/>
    </ligand>
</feature>
<feature type="binding site" description="in other chain" evidence="2">
    <location>
        <position position="162"/>
    </location>
    <ligand>
        <name>IMP</name>
        <dbReference type="ChEBI" id="CHEBI:58053"/>
        <note>ligand shared between dimeric partners</note>
    </ligand>
</feature>
<feature type="binding site" evidence="2">
    <location>
        <position position="176"/>
    </location>
    <ligand>
        <name>IMP</name>
        <dbReference type="ChEBI" id="CHEBI:58053"/>
        <note>ligand shared between dimeric partners</note>
    </ligand>
</feature>
<feature type="binding site" description="in other chain" evidence="2">
    <location>
        <position position="255"/>
    </location>
    <ligand>
        <name>IMP</name>
        <dbReference type="ChEBI" id="CHEBI:58053"/>
        <note>ligand shared between dimeric partners</note>
    </ligand>
</feature>
<feature type="binding site" description="in other chain" evidence="2">
    <location>
        <position position="270"/>
    </location>
    <ligand>
        <name>IMP</name>
        <dbReference type="ChEBI" id="CHEBI:58053"/>
        <note>ligand shared between dimeric partners</note>
    </ligand>
</feature>
<feature type="binding site" evidence="2">
    <location>
        <begin position="330"/>
        <end position="336"/>
    </location>
    <ligand>
        <name>substrate</name>
    </ligand>
</feature>
<feature type="binding site" description="in other chain" evidence="2">
    <location>
        <position position="334"/>
    </location>
    <ligand>
        <name>IMP</name>
        <dbReference type="ChEBI" id="CHEBI:58053"/>
        <note>ligand shared between dimeric partners</note>
    </ligand>
</feature>
<feature type="binding site" evidence="2">
    <location>
        <position position="336"/>
    </location>
    <ligand>
        <name>GTP</name>
        <dbReference type="ChEBI" id="CHEBI:37565"/>
    </ligand>
</feature>
<feature type="binding site" evidence="2">
    <location>
        <begin position="362"/>
        <end position="364"/>
    </location>
    <ligand>
        <name>GTP</name>
        <dbReference type="ChEBI" id="CHEBI:37565"/>
    </ligand>
</feature>
<feature type="binding site" evidence="2">
    <location>
        <begin position="444"/>
        <end position="447"/>
    </location>
    <ligand>
        <name>GTP</name>
        <dbReference type="ChEBI" id="CHEBI:37565"/>
    </ligand>
</feature>
<feature type="modified residue" description="Phosphoserine" evidence="4">
    <location>
        <position position="130"/>
    </location>
</feature>
<accession>Q6NSN5</accession>
<keyword id="KW-0963">Cytoplasm</keyword>
<keyword id="KW-0342">GTP-binding</keyword>
<keyword id="KW-0436">Ligase</keyword>
<keyword id="KW-0460">Magnesium</keyword>
<keyword id="KW-0479">Metal-binding</keyword>
<keyword id="KW-0547">Nucleotide-binding</keyword>
<keyword id="KW-0597">Phosphoprotein</keyword>
<keyword id="KW-0658">Purine biosynthesis</keyword>
<keyword id="KW-1185">Reference proteome</keyword>